<reference key="1">
    <citation type="journal article" date="2004" name="Science">
        <title>The genomic sequence of the accidental pathogen Legionella pneumophila.</title>
        <authorList>
            <person name="Chien M."/>
            <person name="Morozova I."/>
            <person name="Shi S."/>
            <person name="Sheng H."/>
            <person name="Chen J."/>
            <person name="Gomez S.M."/>
            <person name="Asamani G."/>
            <person name="Hill K."/>
            <person name="Nuara J."/>
            <person name="Feder M."/>
            <person name="Rineer J."/>
            <person name="Greenberg J.J."/>
            <person name="Steshenko V."/>
            <person name="Park S.H."/>
            <person name="Zhao B."/>
            <person name="Teplitskaya E."/>
            <person name="Edwards J.R."/>
            <person name="Pampou S."/>
            <person name="Georghiou A."/>
            <person name="Chou I.-C."/>
            <person name="Iannuccilli W."/>
            <person name="Ulz M.E."/>
            <person name="Kim D.H."/>
            <person name="Geringer-Sameth A."/>
            <person name="Goldsberry C."/>
            <person name="Morozov P."/>
            <person name="Fischer S.G."/>
            <person name="Segal G."/>
            <person name="Qu X."/>
            <person name="Rzhetsky A."/>
            <person name="Zhang P."/>
            <person name="Cayanis E."/>
            <person name="De Jong P.J."/>
            <person name="Ju J."/>
            <person name="Kalachikov S."/>
            <person name="Shuman H.A."/>
            <person name="Russo J.J."/>
        </authorList>
    </citation>
    <scope>NUCLEOTIDE SEQUENCE [LARGE SCALE GENOMIC DNA]</scope>
    <source>
        <strain>Philadelphia 1 / ATCC 33152 / DSM 7513</strain>
    </source>
</reference>
<sequence>MPRVKRGVTAKARHKKILDQAKGYYGARSRTYRVAKQAVIKAGQYAYRDRRQKKRQFRALWITRINAQARECGLSYSRLIDGLKKASIELDRKILADMAVHDKVAFAAIAEQAKAALAG</sequence>
<organism>
    <name type="scientific">Legionella pneumophila subsp. pneumophila (strain Philadelphia 1 / ATCC 33152 / DSM 7513)</name>
    <dbReference type="NCBI Taxonomy" id="272624"/>
    <lineage>
        <taxon>Bacteria</taxon>
        <taxon>Pseudomonadati</taxon>
        <taxon>Pseudomonadota</taxon>
        <taxon>Gammaproteobacteria</taxon>
        <taxon>Legionellales</taxon>
        <taxon>Legionellaceae</taxon>
        <taxon>Legionella</taxon>
    </lineage>
</organism>
<name>RL20_LEGPH</name>
<protein>
    <recommendedName>
        <fullName evidence="1">Large ribosomal subunit protein bL20</fullName>
    </recommendedName>
    <alternativeName>
        <fullName evidence="2">50S ribosomal protein L20</fullName>
    </alternativeName>
</protein>
<feature type="chain" id="PRO_0000243696" description="Large ribosomal subunit protein bL20">
    <location>
        <begin position="1"/>
        <end position="119"/>
    </location>
</feature>
<keyword id="KW-1185">Reference proteome</keyword>
<keyword id="KW-0687">Ribonucleoprotein</keyword>
<keyword id="KW-0689">Ribosomal protein</keyword>
<keyword id="KW-0694">RNA-binding</keyword>
<keyword id="KW-0699">rRNA-binding</keyword>
<accession>Q5ZS07</accession>
<proteinExistence type="inferred from homology"/>
<gene>
    <name evidence="1" type="primary">rplT</name>
    <name type="ordered locus">lpg2712</name>
</gene>
<dbReference type="EMBL" id="AE017354">
    <property type="protein sequence ID" value="AAU28770.1"/>
    <property type="molecule type" value="Genomic_DNA"/>
</dbReference>
<dbReference type="RefSeq" id="WP_010948412.1">
    <property type="nucleotide sequence ID" value="NC_002942.5"/>
</dbReference>
<dbReference type="RefSeq" id="YP_096717.1">
    <property type="nucleotide sequence ID" value="NC_002942.5"/>
</dbReference>
<dbReference type="SMR" id="Q5ZS07"/>
<dbReference type="STRING" id="272624.lpg2712"/>
<dbReference type="PaxDb" id="272624-lpg2712"/>
<dbReference type="GeneID" id="57036713"/>
<dbReference type="KEGG" id="lpn:lpg2712"/>
<dbReference type="PATRIC" id="fig|272624.6.peg.2897"/>
<dbReference type="eggNOG" id="COG0292">
    <property type="taxonomic scope" value="Bacteria"/>
</dbReference>
<dbReference type="HOGENOM" id="CLU_123265_0_1_6"/>
<dbReference type="OrthoDB" id="9808966at2"/>
<dbReference type="Proteomes" id="UP000000609">
    <property type="component" value="Chromosome"/>
</dbReference>
<dbReference type="GO" id="GO:1990904">
    <property type="term" value="C:ribonucleoprotein complex"/>
    <property type="evidence" value="ECO:0007669"/>
    <property type="project" value="UniProtKB-KW"/>
</dbReference>
<dbReference type="GO" id="GO:0005840">
    <property type="term" value="C:ribosome"/>
    <property type="evidence" value="ECO:0007669"/>
    <property type="project" value="UniProtKB-KW"/>
</dbReference>
<dbReference type="GO" id="GO:0019843">
    <property type="term" value="F:rRNA binding"/>
    <property type="evidence" value="ECO:0007669"/>
    <property type="project" value="UniProtKB-UniRule"/>
</dbReference>
<dbReference type="GO" id="GO:0003735">
    <property type="term" value="F:structural constituent of ribosome"/>
    <property type="evidence" value="ECO:0007669"/>
    <property type="project" value="InterPro"/>
</dbReference>
<dbReference type="GO" id="GO:0000027">
    <property type="term" value="P:ribosomal large subunit assembly"/>
    <property type="evidence" value="ECO:0007669"/>
    <property type="project" value="UniProtKB-UniRule"/>
</dbReference>
<dbReference type="GO" id="GO:0006412">
    <property type="term" value="P:translation"/>
    <property type="evidence" value="ECO:0007669"/>
    <property type="project" value="InterPro"/>
</dbReference>
<dbReference type="CDD" id="cd07026">
    <property type="entry name" value="Ribosomal_L20"/>
    <property type="match status" value="1"/>
</dbReference>
<dbReference type="FunFam" id="1.10.1900.20:FF:000001">
    <property type="entry name" value="50S ribosomal protein L20"/>
    <property type="match status" value="1"/>
</dbReference>
<dbReference type="Gene3D" id="6.10.160.10">
    <property type="match status" value="1"/>
</dbReference>
<dbReference type="Gene3D" id="1.10.1900.20">
    <property type="entry name" value="Ribosomal protein L20"/>
    <property type="match status" value="1"/>
</dbReference>
<dbReference type="HAMAP" id="MF_00382">
    <property type="entry name" value="Ribosomal_bL20"/>
    <property type="match status" value="1"/>
</dbReference>
<dbReference type="InterPro" id="IPR005813">
    <property type="entry name" value="Ribosomal_bL20"/>
</dbReference>
<dbReference type="InterPro" id="IPR049946">
    <property type="entry name" value="RIBOSOMAL_L20_CS"/>
</dbReference>
<dbReference type="InterPro" id="IPR035566">
    <property type="entry name" value="Ribosomal_protein_bL20_C"/>
</dbReference>
<dbReference type="NCBIfam" id="TIGR01032">
    <property type="entry name" value="rplT_bact"/>
    <property type="match status" value="1"/>
</dbReference>
<dbReference type="PANTHER" id="PTHR10986">
    <property type="entry name" value="39S RIBOSOMAL PROTEIN L20"/>
    <property type="match status" value="1"/>
</dbReference>
<dbReference type="Pfam" id="PF00453">
    <property type="entry name" value="Ribosomal_L20"/>
    <property type="match status" value="1"/>
</dbReference>
<dbReference type="PRINTS" id="PR00062">
    <property type="entry name" value="RIBOSOMALL20"/>
</dbReference>
<dbReference type="SUPFAM" id="SSF74731">
    <property type="entry name" value="Ribosomal protein L20"/>
    <property type="match status" value="1"/>
</dbReference>
<dbReference type="PROSITE" id="PS00937">
    <property type="entry name" value="RIBOSOMAL_L20"/>
    <property type="match status" value="1"/>
</dbReference>
<evidence type="ECO:0000255" key="1">
    <source>
        <dbReference type="HAMAP-Rule" id="MF_00382"/>
    </source>
</evidence>
<evidence type="ECO:0000305" key="2"/>
<comment type="function">
    <text evidence="1">Binds directly to 23S ribosomal RNA and is necessary for the in vitro assembly process of the 50S ribosomal subunit. It is not involved in the protein synthesizing functions of that subunit.</text>
</comment>
<comment type="similarity">
    <text evidence="1">Belongs to the bacterial ribosomal protein bL20 family.</text>
</comment>